<feature type="chain" id="PRO_0000257050" description="Probable transcriptional regulatory protein CPR_1922">
    <location>
        <begin position="1"/>
        <end position="245"/>
    </location>
</feature>
<reference key="1">
    <citation type="journal article" date="2006" name="Genome Res.">
        <title>Skewed genomic variability in strains of the toxigenic bacterial pathogen, Clostridium perfringens.</title>
        <authorList>
            <person name="Myers G.S.A."/>
            <person name="Rasko D.A."/>
            <person name="Cheung J.K."/>
            <person name="Ravel J."/>
            <person name="Seshadri R."/>
            <person name="DeBoy R.T."/>
            <person name="Ren Q."/>
            <person name="Varga J."/>
            <person name="Awad M.M."/>
            <person name="Brinkac L.M."/>
            <person name="Daugherty S.C."/>
            <person name="Haft D.H."/>
            <person name="Dodson R.J."/>
            <person name="Madupu R."/>
            <person name="Nelson W.C."/>
            <person name="Rosovitz M.J."/>
            <person name="Sullivan S.A."/>
            <person name="Khouri H."/>
            <person name="Dimitrov G.I."/>
            <person name="Watkins K.L."/>
            <person name="Mulligan S."/>
            <person name="Benton J."/>
            <person name="Radune D."/>
            <person name="Fisher D.J."/>
            <person name="Atkins H.S."/>
            <person name="Hiscox T."/>
            <person name="Jost B.H."/>
            <person name="Billington S.J."/>
            <person name="Songer J.G."/>
            <person name="McClane B.A."/>
            <person name="Titball R.W."/>
            <person name="Rood J.I."/>
            <person name="Melville S.B."/>
            <person name="Paulsen I.T."/>
        </authorList>
    </citation>
    <scope>NUCLEOTIDE SEQUENCE [LARGE SCALE GENOMIC DNA]</scope>
    <source>
        <strain>SM101 / Type A</strain>
    </source>
</reference>
<comment type="subcellular location">
    <subcellularLocation>
        <location evidence="1">Cytoplasm</location>
    </subcellularLocation>
</comment>
<comment type="similarity">
    <text evidence="1">Belongs to the TACO1 family.</text>
</comment>
<dbReference type="EMBL" id="CP000312">
    <property type="protein sequence ID" value="ABG87470.1"/>
    <property type="molecule type" value="Genomic_DNA"/>
</dbReference>
<dbReference type="RefSeq" id="WP_003451771.1">
    <property type="nucleotide sequence ID" value="NZ_CAXVKH010000002.1"/>
</dbReference>
<dbReference type="SMR" id="Q0SRM5"/>
<dbReference type="KEGG" id="cpr:CPR_1922"/>
<dbReference type="BioCyc" id="CPER289380:GI76-1933-MONOMER"/>
<dbReference type="Proteomes" id="UP000001824">
    <property type="component" value="Chromosome"/>
</dbReference>
<dbReference type="GO" id="GO:0005829">
    <property type="term" value="C:cytosol"/>
    <property type="evidence" value="ECO:0007669"/>
    <property type="project" value="TreeGrafter"/>
</dbReference>
<dbReference type="GO" id="GO:0003677">
    <property type="term" value="F:DNA binding"/>
    <property type="evidence" value="ECO:0007669"/>
    <property type="project" value="UniProtKB-UniRule"/>
</dbReference>
<dbReference type="GO" id="GO:0006355">
    <property type="term" value="P:regulation of DNA-templated transcription"/>
    <property type="evidence" value="ECO:0007669"/>
    <property type="project" value="UniProtKB-UniRule"/>
</dbReference>
<dbReference type="FunFam" id="1.10.10.200:FF:000002">
    <property type="entry name" value="Probable transcriptional regulatory protein CLM62_37755"/>
    <property type="match status" value="1"/>
</dbReference>
<dbReference type="FunFam" id="3.30.70.980:FF:000002">
    <property type="entry name" value="Probable transcriptional regulatory protein YebC"/>
    <property type="match status" value="1"/>
</dbReference>
<dbReference type="Gene3D" id="1.10.10.200">
    <property type="match status" value="1"/>
</dbReference>
<dbReference type="Gene3D" id="3.30.70.980">
    <property type="match status" value="2"/>
</dbReference>
<dbReference type="HAMAP" id="MF_00693">
    <property type="entry name" value="Transcrip_reg_TACO1"/>
    <property type="match status" value="1"/>
</dbReference>
<dbReference type="InterPro" id="IPR017856">
    <property type="entry name" value="Integrase-like_N"/>
</dbReference>
<dbReference type="InterPro" id="IPR048300">
    <property type="entry name" value="TACO1_YebC-like_2nd/3rd_dom"/>
</dbReference>
<dbReference type="InterPro" id="IPR049083">
    <property type="entry name" value="TACO1_YebC_N"/>
</dbReference>
<dbReference type="InterPro" id="IPR002876">
    <property type="entry name" value="Transcrip_reg_TACO1-like"/>
</dbReference>
<dbReference type="InterPro" id="IPR026564">
    <property type="entry name" value="Transcrip_reg_TACO1-like_dom3"/>
</dbReference>
<dbReference type="InterPro" id="IPR029072">
    <property type="entry name" value="YebC-like"/>
</dbReference>
<dbReference type="NCBIfam" id="NF001030">
    <property type="entry name" value="PRK00110.1"/>
    <property type="match status" value="1"/>
</dbReference>
<dbReference type="NCBIfam" id="NF009044">
    <property type="entry name" value="PRK12378.1"/>
    <property type="match status" value="1"/>
</dbReference>
<dbReference type="NCBIfam" id="TIGR01033">
    <property type="entry name" value="YebC/PmpR family DNA-binding transcriptional regulator"/>
    <property type="match status" value="1"/>
</dbReference>
<dbReference type="PANTHER" id="PTHR12532:SF6">
    <property type="entry name" value="TRANSCRIPTIONAL REGULATORY PROTEIN YEBC-RELATED"/>
    <property type="match status" value="1"/>
</dbReference>
<dbReference type="PANTHER" id="PTHR12532">
    <property type="entry name" value="TRANSLATIONAL ACTIVATOR OF CYTOCHROME C OXIDASE 1"/>
    <property type="match status" value="1"/>
</dbReference>
<dbReference type="Pfam" id="PF20772">
    <property type="entry name" value="TACO1_YebC_N"/>
    <property type="match status" value="1"/>
</dbReference>
<dbReference type="Pfam" id="PF01709">
    <property type="entry name" value="Transcrip_reg"/>
    <property type="match status" value="1"/>
</dbReference>
<dbReference type="SUPFAM" id="SSF75625">
    <property type="entry name" value="YebC-like"/>
    <property type="match status" value="1"/>
</dbReference>
<keyword id="KW-0963">Cytoplasm</keyword>
<keyword id="KW-0238">DNA-binding</keyword>
<keyword id="KW-0804">Transcription</keyword>
<keyword id="KW-0805">Transcription regulation</keyword>
<organism>
    <name type="scientific">Clostridium perfringens (strain SM101 / Type A)</name>
    <dbReference type="NCBI Taxonomy" id="289380"/>
    <lineage>
        <taxon>Bacteria</taxon>
        <taxon>Bacillati</taxon>
        <taxon>Bacillota</taxon>
        <taxon>Clostridia</taxon>
        <taxon>Eubacteriales</taxon>
        <taxon>Clostridiaceae</taxon>
        <taxon>Clostridium</taxon>
    </lineage>
</organism>
<proteinExistence type="inferred from homology"/>
<evidence type="ECO:0000255" key="1">
    <source>
        <dbReference type="HAMAP-Rule" id="MF_00693"/>
    </source>
</evidence>
<sequence>MSGHSKWHNIQAKKGKMDAKRGKIFTKIGKEIAVAVKEGGANLDGNSRLKDAVAKAKAANMPNDNIQRAIKKAAGEGDSVNYESIVYEGYGPSGVAVMVEVLTDNKNRSAGNVRSAFTKGGGNMGTSGCVGFMFQKKGEIVIEKAELDEDEIMMMALDAGAEDFASEEEVFIVTTSPEDFGTVREALEAEGLEFLEAAVKMIPDTETAINEDDAKKFQKMLDLLEDDDDVQEVYHNAEFPEGWDE</sequence>
<name>Y1922_CLOPS</name>
<accession>Q0SRM5</accession>
<protein>
    <recommendedName>
        <fullName evidence="1">Probable transcriptional regulatory protein CPR_1922</fullName>
    </recommendedName>
</protein>
<gene>
    <name type="ordered locus">CPR_1922</name>
</gene>